<feature type="chain" id="PRO_1000055027" description="Small ribosomal subunit protein uS17">
    <location>
        <begin position="1"/>
        <end position="78"/>
    </location>
</feature>
<dbReference type="EMBL" id="CP000738">
    <property type="protein sequence ID" value="ABR59848.1"/>
    <property type="molecule type" value="Genomic_DNA"/>
</dbReference>
<dbReference type="RefSeq" id="WP_011975177.1">
    <property type="nucleotide sequence ID" value="NC_009636.1"/>
</dbReference>
<dbReference type="RefSeq" id="YP_001326683.1">
    <property type="nucleotide sequence ID" value="NC_009636.1"/>
</dbReference>
<dbReference type="SMR" id="A6U868"/>
<dbReference type="STRING" id="366394.Smed_0995"/>
<dbReference type="GeneID" id="61614921"/>
<dbReference type="KEGG" id="smd:Smed_0995"/>
<dbReference type="PATRIC" id="fig|366394.8.peg.4116"/>
<dbReference type="eggNOG" id="COG0186">
    <property type="taxonomic scope" value="Bacteria"/>
</dbReference>
<dbReference type="HOGENOM" id="CLU_073626_1_1_5"/>
<dbReference type="OrthoDB" id="9811714at2"/>
<dbReference type="Proteomes" id="UP000001108">
    <property type="component" value="Chromosome"/>
</dbReference>
<dbReference type="GO" id="GO:0022627">
    <property type="term" value="C:cytosolic small ribosomal subunit"/>
    <property type="evidence" value="ECO:0007669"/>
    <property type="project" value="TreeGrafter"/>
</dbReference>
<dbReference type="GO" id="GO:0019843">
    <property type="term" value="F:rRNA binding"/>
    <property type="evidence" value="ECO:0007669"/>
    <property type="project" value="UniProtKB-UniRule"/>
</dbReference>
<dbReference type="GO" id="GO:0003735">
    <property type="term" value="F:structural constituent of ribosome"/>
    <property type="evidence" value="ECO:0007669"/>
    <property type="project" value="InterPro"/>
</dbReference>
<dbReference type="GO" id="GO:0006412">
    <property type="term" value="P:translation"/>
    <property type="evidence" value="ECO:0007669"/>
    <property type="project" value="UniProtKB-UniRule"/>
</dbReference>
<dbReference type="CDD" id="cd00364">
    <property type="entry name" value="Ribosomal_uS17"/>
    <property type="match status" value="1"/>
</dbReference>
<dbReference type="Gene3D" id="2.40.50.140">
    <property type="entry name" value="Nucleic acid-binding proteins"/>
    <property type="match status" value="1"/>
</dbReference>
<dbReference type="HAMAP" id="MF_01345_B">
    <property type="entry name" value="Ribosomal_uS17_B"/>
    <property type="match status" value="1"/>
</dbReference>
<dbReference type="InterPro" id="IPR012340">
    <property type="entry name" value="NA-bd_OB-fold"/>
</dbReference>
<dbReference type="InterPro" id="IPR000266">
    <property type="entry name" value="Ribosomal_uS17"/>
</dbReference>
<dbReference type="InterPro" id="IPR019984">
    <property type="entry name" value="Ribosomal_uS17_bact/chlr"/>
</dbReference>
<dbReference type="NCBIfam" id="NF004123">
    <property type="entry name" value="PRK05610.1"/>
    <property type="match status" value="1"/>
</dbReference>
<dbReference type="NCBIfam" id="TIGR03635">
    <property type="entry name" value="uS17_bact"/>
    <property type="match status" value="1"/>
</dbReference>
<dbReference type="PANTHER" id="PTHR10744">
    <property type="entry name" value="40S RIBOSOMAL PROTEIN S11 FAMILY MEMBER"/>
    <property type="match status" value="1"/>
</dbReference>
<dbReference type="PANTHER" id="PTHR10744:SF1">
    <property type="entry name" value="SMALL RIBOSOMAL SUBUNIT PROTEIN US17M"/>
    <property type="match status" value="1"/>
</dbReference>
<dbReference type="Pfam" id="PF00366">
    <property type="entry name" value="Ribosomal_S17"/>
    <property type="match status" value="1"/>
</dbReference>
<dbReference type="PRINTS" id="PR00973">
    <property type="entry name" value="RIBOSOMALS17"/>
</dbReference>
<dbReference type="SUPFAM" id="SSF50249">
    <property type="entry name" value="Nucleic acid-binding proteins"/>
    <property type="match status" value="1"/>
</dbReference>
<evidence type="ECO:0000255" key="1">
    <source>
        <dbReference type="HAMAP-Rule" id="MF_01345"/>
    </source>
</evidence>
<evidence type="ECO:0000305" key="2"/>
<accession>A6U868</accession>
<proteinExistence type="inferred from homology"/>
<sequence length="78" mass="8964">MPKRILQGTVVSDKNDKTVVVRVERRFAHPILQKTVRRSKKYKAHDESNQFKVGDLVSIEECAPISKDKRWTVVSAQS</sequence>
<comment type="function">
    <text evidence="1">One of the primary rRNA binding proteins, it binds specifically to the 5'-end of 16S ribosomal RNA.</text>
</comment>
<comment type="subunit">
    <text evidence="1">Part of the 30S ribosomal subunit.</text>
</comment>
<comment type="similarity">
    <text evidence="1">Belongs to the universal ribosomal protein uS17 family.</text>
</comment>
<protein>
    <recommendedName>
        <fullName evidence="1">Small ribosomal subunit protein uS17</fullName>
    </recommendedName>
    <alternativeName>
        <fullName evidence="2">30S ribosomal protein S17</fullName>
    </alternativeName>
</protein>
<organism>
    <name type="scientific">Sinorhizobium medicae (strain WSM419)</name>
    <name type="common">Ensifer medicae</name>
    <dbReference type="NCBI Taxonomy" id="366394"/>
    <lineage>
        <taxon>Bacteria</taxon>
        <taxon>Pseudomonadati</taxon>
        <taxon>Pseudomonadota</taxon>
        <taxon>Alphaproteobacteria</taxon>
        <taxon>Hyphomicrobiales</taxon>
        <taxon>Rhizobiaceae</taxon>
        <taxon>Sinorhizobium/Ensifer group</taxon>
        <taxon>Sinorhizobium</taxon>
    </lineage>
</organism>
<name>RS17_SINMW</name>
<keyword id="KW-0687">Ribonucleoprotein</keyword>
<keyword id="KW-0689">Ribosomal protein</keyword>
<keyword id="KW-0694">RNA-binding</keyword>
<keyword id="KW-0699">rRNA-binding</keyword>
<gene>
    <name evidence="1" type="primary">rpsQ</name>
    <name type="ordered locus">Smed_0995</name>
</gene>
<reference key="1">
    <citation type="submission" date="2007-06" db="EMBL/GenBank/DDBJ databases">
        <title>Complete sequence of Sinorhizobium medicae WSM419 chromosome.</title>
        <authorList>
            <consortium name="US DOE Joint Genome Institute"/>
            <person name="Copeland A."/>
            <person name="Lucas S."/>
            <person name="Lapidus A."/>
            <person name="Barry K."/>
            <person name="Glavina del Rio T."/>
            <person name="Dalin E."/>
            <person name="Tice H."/>
            <person name="Pitluck S."/>
            <person name="Chain P."/>
            <person name="Malfatti S."/>
            <person name="Shin M."/>
            <person name="Vergez L."/>
            <person name="Schmutz J."/>
            <person name="Larimer F."/>
            <person name="Land M."/>
            <person name="Hauser L."/>
            <person name="Kyrpides N."/>
            <person name="Mikhailova N."/>
            <person name="Reeve W.G."/>
            <person name="Richardson P."/>
        </authorList>
    </citation>
    <scope>NUCLEOTIDE SEQUENCE [LARGE SCALE GENOMIC DNA]</scope>
    <source>
        <strain>WSM419</strain>
    </source>
</reference>